<organism>
    <name type="scientific">Anaplasma marginale (strain St. Maries)</name>
    <dbReference type="NCBI Taxonomy" id="234826"/>
    <lineage>
        <taxon>Bacteria</taxon>
        <taxon>Pseudomonadati</taxon>
        <taxon>Pseudomonadota</taxon>
        <taxon>Alphaproteobacteria</taxon>
        <taxon>Rickettsiales</taxon>
        <taxon>Anaplasmataceae</taxon>
        <taxon>Anaplasma</taxon>
    </lineage>
</organism>
<dbReference type="EC" id="2.6.99.2" evidence="1"/>
<dbReference type="EMBL" id="CP000030">
    <property type="protein sequence ID" value="AAV86484.1"/>
    <property type="status" value="ALT_INIT"/>
    <property type="molecule type" value="Genomic_DNA"/>
</dbReference>
<dbReference type="RefSeq" id="WP_010263989.1">
    <property type="nucleotide sequence ID" value="NZ_AFMU01000053.1"/>
</dbReference>
<dbReference type="SMR" id="Q3V7J9"/>
<dbReference type="KEGG" id="ama:AM434"/>
<dbReference type="PATRIC" id="fig|320483.3.peg.374"/>
<dbReference type="HOGENOM" id="CLU_074563_0_0_5"/>
<dbReference type="UniPathway" id="UPA00244">
    <property type="reaction ID" value="UER00313"/>
</dbReference>
<dbReference type="GO" id="GO:0005829">
    <property type="term" value="C:cytosol"/>
    <property type="evidence" value="ECO:0007669"/>
    <property type="project" value="TreeGrafter"/>
</dbReference>
<dbReference type="GO" id="GO:0033856">
    <property type="term" value="F:pyridoxine 5'-phosphate synthase activity"/>
    <property type="evidence" value="ECO:0007669"/>
    <property type="project" value="UniProtKB-EC"/>
</dbReference>
<dbReference type="GO" id="GO:0008615">
    <property type="term" value="P:pyridoxine biosynthetic process"/>
    <property type="evidence" value="ECO:0007669"/>
    <property type="project" value="UniProtKB-UniRule"/>
</dbReference>
<dbReference type="CDD" id="cd00003">
    <property type="entry name" value="PNPsynthase"/>
    <property type="match status" value="1"/>
</dbReference>
<dbReference type="Gene3D" id="3.20.20.70">
    <property type="entry name" value="Aldolase class I"/>
    <property type="match status" value="1"/>
</dbReference>
<dbReference type="HAMAP" id="MF_00279">
    <property type="entry name" value="PdxJ"/>
    <property type="match status" value="1"/>
</dbReference>
<dbReference type="InterPro" id="IPR013785">
    <property type="entry name" value="Aldolase_TIM"/>
</dbReference>
<dbReference type="InterPro" id="IPR004569">
    <property type="entry name" value="PyrdxlP_synth_PdxJ"/>
</dbReference>
<dbReference type="InterPro" id="IPR036130">
    <property type="entry name" value="Pyridoxine-5'_phos_synth"/>
</dbReference>
<dbReference type="NCBIfam" id="TIGR00559">
    <property type="entry name" value="pdxJ"/>
    <property type="match status" value="1"/>
</dbReference>
<dbReference type="NCBIfam" id="NF003625">
    <property type="entry name" value="PRK05265.1-3"/>
    <property type="match status" value="1"/>
</dbReference>
<dbReference type="NCBIfam" id="NF003627">
    <property type="entry name" value="PRK05265.1-5"/>
    <property type="match status" value="1"/>
</dbReference>
<dbReference type="PANTHER" id="PTHR30456">
    <property type="entry name" value="PYRIDOXINE 5'-PHOSPHATE SYNTHASE"/>
    <property type="match status" value="1"/>
</dbReference>
<dbReference type="PANTHER" id="PTHR30456:SF0">
    <property type="entry name" value="PYRIDOXINE 5'-PHOSPHATE SYNTHASE"/>
    <property type="match status" value="1"/>
</dbReference>
<dbReference type="Pfam" id="PF03740">
    <property type="entry name" value="PdxJ"/>
    <property type="match status" value="1"/>
</dbReference>
<dbReference type="SUPFAM" id="SSF63892">
    <property type="entry name" value="Pyridoxine 5'-phosphate synthase"/>
    <property type="match status" value="1"/>
</dbReference>
<protein>
    <recommendedName>
        <fullName evidence="1">Pyridoxine 5'-phosphate synthase</fullName>
        <shortName evidence="1">PNP synthase</shortName>
        <ecNumber evidence="1">2.6.99.2</ecNumber>
    </recommendedName>
</protein>
<keyword id="KW-0963">Cytoplasm</keyword>
<keyword id="KW-0664">Pyridoxine biosynthesis</keyword>
<keyword id="KW-0808">Transferase</keyword>
<gene>
    <name evidence="1" type="primary">pdxJ</name>
    <name type="ordered locus">AM434</name>
</gene>
<comment type="function">
    <text evidence="1">Catalyzes the complicated ring closure reaction between the two acyclic compounds 1-deoxy-D-xylulose-5-phosphate (DXP) and 3-amino-2-oxopropyl phosphate (1-amino-acetone-3-phosphate or AAP) to form pyridoxine 5'-phosphate (PNP) and inorganic phosphate.</text>
</comment>
<comment type="catalytic activity">
    <reaction evidence="1">
        <text>3-amino-2-oxopropyl phosphate + 1-deoxy-D-xylulose 5-phosphate = pyridoxine 5'-phosphate + phosphate + 2 H2O + H(+)</text>
        <dbReference type="Rhea" id="RHEA:15265"/>
        <dbReference type="ChEBI" id="CHEBI:15377"/>
        <dbReference type="ChEBI" id="CHEBI:15378"/>
        <dbReference type="ChEBI" id="CHEBI:43474"/>
        <dbReference type="ChEBI" id="CHEBI:57279"/>
        <dbReference type="ChEBI" id="CHEBI:57792"/>
        <dbReference type="ChEBI" id="CHEBI:58589"/>
        <dbReference type="EC" id="2.6.99.2"/>
    </reaction>
</comment>
<comment type="pathway">
    <text evidence="1">Cofactor biosynthesis; pyridoxine 5'-phosphate biosynthesis; pyridoxine 5'-phosphate from D-erythrose 4-phosphate: step 5/5.</text>
</comment>
<comment type="subunit">
    <text evidence="1">Homooctamer; tetramer of dimers.</text>
</comment>
<comment type="subcellular location">
    <subcellularLocation>
        <location evidence="1">Cytoplasm</location>
    </subcellularLocation>
</comment>
<comment type="similarity">
    <text evidence="1">Belongs to the PNP synthase family.</text>
</comment>
<comment type="sequence caution" evidence="2">
    <conflict type="erroneous initiation">
        <sequence resource="EMBL-CDS" id="AAV86484"/>
    </conflict>
</comment>
<feature type="chain" id="PRO_0000231779" description="Pyridoxine 5'-phosphate synthase">
    <location>
        <begin position="1"/>
        <end position="238"/>
    </location>
</feature>
<feature type="active site" description="Proton acceptor" evidence="1">
    <location>
        <position position="42"/>
    </location>
</feature>
<feature type="active site" description="Proton acceptor" evidence="1">
    <location>
        <position position="69"/>
    </location>
</feature>
<feature type="active site" description="Proton donor" evidence="1">
    <location>
        <position position="186"/>
    </location>
</feature>
<feature type="binding site" evidence="1">
    <location>
        <position position="6"/>
    </location>
    <ligand>
        <name>3-amino-2-oxopropyl phosphate</name>
        <dbReference type="ChEBI" id="CHEBI:57279"/>
    </ligand>
</feature>
<feature type="binding site" evidence="1">
    <location>
        <begin position="8"/>
        <end position="9"/>
    </location>
    <ligand>
        <name>1-deoxy-D-xylulose 5-phosphate</name>
        <dbReference type="ChEBI" id="CHEBI:57792"/>
    </ligand>
</feature>
<feature type="binding site" evidence="1">
    <location>
        <position position="17"/>
    </location>
    <ligand>
        <name>3-amino-2-oxopropyl phosphate</name>
        <dbReference type="ChEBI" id="CHEBI:57279"/>
    </ligand>
</feature>
<feature type="binding site" evidence="1">
    <location>
        <position position="44"/>
    </location>
    <ligand>
        <name>1-deoxy-D-xylulose 5-phosphate</name>
        <dbReference type="ChEBI" id="CHEBI:57792"/>
    </ligand>
</feature>
<feature type="binding site" evidence="1">
    <location>
        <position position="49"/>
    </location>
    <ligand>
        <name>1-deoxy-D-xylulose 5-phosphate</name>
        <dbReference type="ChEBI" id="CHEBI:57792"/>
    </ligand>
</feature>
<feature type="binding site" evidence="1">
    <location>
        <position position="99"/>
    </location>
    <ligand>
        <name>1-deoxy-D-xylulose 5-phosphate</name>
        <dbReference type="ChEBI" id="CHEBI:57792"/>
    </ligand>
</feature>
<feature type="binding site" evidence="1">
    <location>
        <position position="187"/>
    </location>
    <ligand>
        <name>3-amino-2-oxopropyl phosphate</name>
        <dbReference type="ChEBI" id="CHEBI:57279"/>
    </ligand>
</feature>
<feature type="binding site" evidence="1">
    <location>
        <begin position="208"/>
        <end position="209"/>
    </location>
    <ligand>
        <name>3-amino-2-oxopropyl phosphate</name>
        <dbReference type="ChEBI" id="CHEBI:57279"/>
    </ligand>
</feature>
<feature type="site" description="Transition state stabilizer" evidence="1">
    <location>
        <position position="150"/>
    </location>
</feature>
<sequence length="238" mass="26188">MQLGVNVDHVATLRNLRSTAYPDVVRIASKAVECGADFITVHLREDRRHIRDGDVFALKKHLAVPLNLEMAATREMLEIAKKVAPRYVCLVPEKREEITTESGVDAKGMFEILAPVVSDLRQSGIGVTLFIEPEKEQVDYAKKLCADKVELHVGAYCLSKSQGELERIANAAAYSHEQGMECHAGHGIDYGTAATIATIRHVSALNVGHFLICESLLHGVGSAVRNMKKIILEQRHNA</sequence>
<name>PDXJ_ANAMM</name>
<reference key="1">
    <citation type="journal article" date="2005" name="Proc. Natl. Acad. Sci. U.S.A.">
        <title>Complete genome sequencing of Anaplasma marginale reveals that the surface is skewed to two superfamilies of outer membrane proteins.</title>
        <authorList>
            <person name="Brayton K.A."/>
            <person name="Kappmeyer L.S."/>
            <person name="Herndon D.R."/>
            <person name="Dark M.J."/>
            <person name="Tibbals D.L."/>
            <person name="Palmer G.H."/>
            <person name="McGuire T.C."/>
            <person name="Knowles D.P. Jr."/>
        </authorList>
    </citation>
    <scope>NUCLEOTIDE SEQUENCE [LARGE SCALE GENOMIC DNA]</scope>
    <source>
        <strain>St. Maries</strain>
    </source>
</reference>
<accession>Q3V7J9</accession>
<evidence type="ECO:0000255" key="1">
    <source>
        <dbReference type="HAMAP-Rule" id="MF_00279"/>
    </source>
</evidence>
<evidence type="ECO:0000305" key="2"/>
<proteinExistence type="inferred from homology"/>